<dbReference type="EC" id="6.3.5.2"/>
<dbReference type="EMBL" id="AE016823">
    <property type="protein sequence ID" value="AAS70417.1"/>
    <property type="molecule type" value="Genomic_DNA"/>
</dbReference>
<dbReference type="RefSeq" id="WP_000234667.1">
    <property type="nucleotide sequence ID" value="NC_005823.1"/>
</dbReference>
<dbReference type="SMR" id="Q72RB7"/>
<dbReference type="MEROPS" id="C26.957"/>
<dbReference type="GeneID" id="61141728"/>
<dbReference type="KEGG" id="lic:LIC_11831"/>
<dbReference type="HOGENOM" id="CLU_014340_0_2_12"/>
<dbReference type="UniPathway" id="UPA00189">
    <property type="reaction ID" value="UER00296"/>
</dbReference>
<dbReference type="Proteomes" id="UP000007037">
    <property type="component" value="Chromosome I"/>
</dbReference>
<dbReference type="GO" id="GO:0005829">
    <property type="term" value="C:cytosol"/>
    <property type="evidence" value="ECO:0007669"/>
    <property type="project" value="TreeGrafter"/>
</dbReference>
<dbReference type="GO" id="GO:0005524">
    <property type="term" value="F:ATP binding"/>
    <property type="evidence" value="ECO:0007669"/>
    <property type="project" value="UniProtKB-KW"/>
</dbReference>
<dbReference type="GO" id="GO:0003921">
    <property type="term" value="F:GMP synthase activity"/>
    <property type="evidence" value="ECO:0007669"/>
    <property type="project" value="InterPro"/>
</dbReference>
<dbReference type="CDD" id="cd01742">
    <property type="entry name" value="GATase1_GMP_Synthase"/>
    <property type="match status" value="1"/>
</dbReference>
<dbReference type="CDD" id="cd01997">
    <property type="entry name" value="GMP_synthase_C"/>
    <property type="match status" value="1"/>
</dbReference>
<dbReference type="FunFam" id="3.40.50.620:FF:000044">
    <property type="entry name" value="GMP synthase [glutamine-hydrolyzing]"/>
    <property type="match status" value="1"/>
</dbReference>
<dbReference type="FunFam" id="3.40.50.880:FF:000047">
    <property type="entry name" value="GMP synthase [glutamine-hydrolyzing] subunit A"/>
    <property type="match status" value="1"/>
</dbReference>
<dbReference type="Gene3D" id="3.30.300.10">
    <property type="match status" value="2"/>
</dbReference>
<dbReference type="Gene3D" id="3.40.50.880">
    <property type="match status" value="1"/>
</dbReference>
<dbReference type="Gene3D" id="3.40.50.620">
    <property type="entry name" value="HUPs"/>
    <property type="match status" value="1"/>
</dbReference>
<dbReference type="InterPro" id="IPR029062">
    <property type="entry name" value="Class_I_gatase-like"/>
</dbReference>
<dbReference type="InterPro" id="IPR017926">
    <property type="entry name" value="GATASE"/>
</dbReference>
<dbReference type="InterPro" id="IPR001674">
    <property type="entry name" value="GMP_synth_C"/>
</dbReference>
<dbReference type="InterPro" id="IPR004739">
    <property type="entry name" value="GMP_synth_GATase"/>
</dbReference>
<dbReference type="InterPro" id="IPR025777">
    <property type="entry name" value="GMPS_ATP_PPase_dom"/>
</dbReference>
<dbReference type="InterPro" id="IPR022310">
    <property type="entry name" value="NAD/GMP_synthase"/>
</dbReference>
<dbReference type="InterPro" id="IPR014729">
    <property type="entry name" value="Rossmann-like_a/b/a_fold"/>
</dbReference>
<dbReference type="NCBIfam" id="TIGR00888">
    <property type="entry name" value="guaA_Nterm"/>
    <property type="match status" value="1"/>
</dbReference>
<dbReference type="NCBIfam" id="NF000848">
    <property type="entry name" value="PRK00074.1"/>
    <property type="match status" value="1"/>
</dbReference>
<dbReference type="PANTHER" id="PTHR11922:SF2">
    <property type="entry name" value="GMP SYNTHASE [GLUTAMINE-HYDROLYZING]"/>
    <property type="match status" value="1"/>
</dbReference>
<dbReference type="PANTHER" id="PTHR11922">
    <property type="entry name" value="GMP SYNTHASE-RELATED"/>
    <property type="match status" value="1"/>
</dbReference>
<dbReference type="Pfam" id="PF00117">
    <property type="entry name" value="GATase"/>
    <property type="match status" value="1"/>
</dbReference>
<dbReference type="Pfam" id="PF00958">
    <property type="entry name" value="GMP_synt_C"/>
    <property type="match status" value="1"/>
</dbReference>
<dbReference type="Pfam" id="PF02540">
    <property type="entry name" value="NAD_synthase"/>
    <property type="match status" value="1"/>
</dbReference>
<dbReference type="PRINTS" id="PR00097">
    <property type="entry name" value="ANTSNTHASEII"/>
</dbReference>
<dbReference type="PRINTS" id="PR00099">
    <property type="entry name" value="CPSGATASE"/>
</dbReference>
<dbReference type="PRINTS" id="PR00096">
    <property type="entry name" value="GATASE"/>
</dbReference>
<dbReference type="SUPFAM" id="SSF52402">
    <property type="entry name" value="Adenine nucleotide alpha hydrolases-like"/>
    <property type="match status" value="1"/>
</dbReference>
<dbReference type="SUPFAM" id="SSF52317">
    <property type="entry name" value="Class I glutamine amidotransferase-like"/>
    <property type="match status" value="1"/>
</dbReference>
<dbReference type="SUPFAM" id="SSF54810">
    <property type="entry name" value="GMP synthetase C-terminal dimerisation domain"/>
    <property type="match status" value="2"/>
</dbReference>
<dbReference type="PROSITE" id="PS51273">
    <property type="entry name" value="GATASE_TYPE_1"/>
    <property type="match status" value="1"/>
</dbReference>
<dbReference type="PROSITE" id="PS51553">
    <property type="entry name" value="GMPS_ATP_PPASE"/>
    <property type="match status" value="1"/>
</dbReference>
<name>GUAA_LEPIC</name>
<feature type="chain" id="PRO_0000140141" description="Probable GMP synthase [glutamine-hydrolyzing]">
    <location>
        <begin position="1"/>
        <end position="603"/>
    </location>
</feature>
<feature type="domain" description="Glutamine amidotransferase type-1" evidence="2">
    <location>
        <begin position="6"/>
        <end position="195"/>
    </location>
</feature>
<feature type="domain" description="GMPS ATP-PPase" evidence="3">
    <location>
        <begin position="196"/>
        <end position="392"/>
    </location>
</feature>
<feature type="active site" description="Nucleophile" evidence="2">
    <location>
        <position position="81"/>
    </location>
</feature>
<feature type="active site" evidence="2">
    <location>
        <position position="170"/>
    </location>
</feature>
<feature type="active site" evidence="2">
    <location>
        <position position="172"/>
    </location>
</feature>
<feature type="binding site" evidence="3">
    <location>
        <begin position="224"/>
        <end position="230"/>
    </location>
    <ligand>
        <name>ATP</name>
        <dbReference type="ChEBI" id="CHEBI:30616"/>
    </ligand>
</feature>
<protein>
    <recommendedName>
        <fullName>Probable GMP synthase [glutamine-hydrolyzing]</fullName>
        <ecNumber>6.3.5.2</ecNumber>
    </recommendedName>
    <alternativeName>
        <fullName>GMP synthetase</fullName>
    </alternativeName>
    <alternativeName>
        <fullName>Glutamine amidotransferase</fullName>
    </alternativeName>
</protein>
<keyword id="KW-0067">ATP-binding</keyword>
<keyword id="KW-0315">Glutamine amidotransferase</keyword>
<keyword id="KW-0332">GMP biosynthesis</keyword>
<keyword id="KW-0436">Ligase</keyword>
<keyword id="KW-0547">Nucleotide-binding</keyword>
<keyword id="KW-0658">Purine biosynthesis</keyword>
<proteinExistence type="inferred from homology"/>
<reference key="1">
    <citation type="journal article" date="2004" name="J. Bacteriol.">
        <title>Comparative genomics of two Leptospira interrogans serovars reveals novel insights into physiology and pathogenesis.</title>
        <authorList>
            <person name="Nascimento A.L.T.O."/>
            <person name="Ko A.I."/>
            <person name="Martins E.A.L."/>
            <person name="Monteiro-Vitorello C.B."/>
            <person name="Ho P.L."/>
            <person name="Haake D.A."/>
            <person name="Verjovski-Almeida S."/>
            <person name="Hartskeerl R.A."/>
            <person name="Marques M.V."/>
            <person name="Oliveira M.C."/>
            <person name="Menck C.F.M."/>
            <person name="Leite L.C.C."/>
            <person name="Carrer H."/>
            <person name="Coutinho L.L."/>
            <person name="Degrave W.M."/>
            <person name="Dellagostin O.A."/>
            <person name="El-Dorry H."/>
            <person name="Ferro E.S."/>
            <person name="Ferro M.I.T."/>
            <person name="Furlan L.R."/>
            <person name="Gamberini M."/>
            <person name="Giglioti E.A."/>
            <person name="Goes-Neto A."/>
            <person name="Goldman G.H."/>
            <person name="Goldman M.H.S."/>
            <person name="Harakava R."/>
            <person name="Jeronimo S.M.B."/>
            <person name="Junqueira-de-Azevedo I.L.M."/>
            <person name="Kimura E.T."/>
            <person name="Kuramae E.E."/>
            <person name="Lemos E.G.M."/>
            <person name="Lemos M.V.F."/>
            <person name="Marino C.L."/>
            <person name="Nunes L.R."/>
            <person name="de Oliveira R.C."/>
            <person name="Pereira G.G."/>
            <person name="Reis M.S."/>
            <person name="Schriefer A."/>
            <person name="Siqueira W.J."/>
            <person name="Sommer P."/>
            <person name="Tsai S.M."/>
            <person name="Simpson A.J.G."/>
            <person name="Ferro J.A."/>
            <person name="Camargo L.E.A."/>
            <person name="Kitajima J.P."/>
            <person name="Setubal J.C."/>
            <person name="Van Sluys M.A."/>
        </authorList>
    </citation>
    <scope>NUCLEOTIDE SEQUENCE [LARGE SCALE GENOMIC DNA]</scope>
    <source>
        <strain>Fiocruz L1-130</strain>
    </source>
</reference>
<organism>
    <name type="scientific">Leptospira interrogans serogroup Icterohaemorrhagiae serovar copenhageni (strain Fiocruz L1-130)</name>
    <dbReference type="NCBI Taxonomy" id="267671"/>
    <lineage>
        <taxon>Bacteria</taxon>
        <taxon>Pseudomonadati</taxon>
        <taxon>Spirochaetota</taxon>
        <taxon>Spirochaetia</taxon>
        <taxon>Leptospirales</taxon>
        <taxon>Leptospiraceae</taxon>
        <taxon>Leptospira</taxon>
    </lineage>
</organism>
<gene>
    <name type="primary">guaA</name>
    <name type="ordered locus">LIC_11831</name>
</gene>
<sequence>MVIHKKIAVVDFGGQYAHLIASRIRRLGAYTEILSNEEPISNYQKYSGIILSGGPESVYEPNSPTVTTRIFDLGIPILGICYGHQLIMKLLGGVVERSGTGEYGPASLQLHGTNGNSILKNFVGGEQVWMNHADEVVKLPEGFSKIAFSKDCGYAVVANSSKKIFGIQFHAEVSHSEKGSVLLDNFIQICGVSKTWGIDQFLKEKIKEIQETVKQEQKIFMLVSGGVDSTVSYLLLCKALGAERVLGFLIDTGFMRKDEVVSLQKKLTFQNIHLTVRDESSLFYKSLKDKSDPEEKRKIVGNLFLEARDRAVKDLDLEYGDWLLGQGTIYPDTIESGGTKHSHTIKTHHNRVEAIQKLIEQGKVIEPIRDLYKDEVRDLGVLLGLESEWVGRHPFPGPGLVVRMLAVEKKGTDKDQLEIDSYLSTQDGLSGKILPIASVGVKGDRRSYANCVVLNDIETDWNTLDRVATHLSNRFSFINRVVLLPFESDLKKWNFQFTGMQLDKKCSDLLREADFTVESVIRKLGLYNKIWQMPVVLLPIGEKENEKSIVLRPVESQEAMTANFFRMERSVLQEIKIEVLKIPEIRYLFFDLTNKPPGTIEWE</sequence>
<comment type="function">
    <text evidence="1">Catalyzes the synthesis of GMP from XMP.</text>
</comment>
<comment type="catalytic activity">
    <reaction>
        <text>XMP + L-glutamine + ATP + H2O = GMP + L-glutamate + AMP + diphosphate + 2 H(+)</text>
        <dbReference type="Rhea" id="RHEA:11680"/>
        <dbReference type="ChEBI" id="CHEBI:15377"/>
        <dbReference type="ChEBI" id="CHEBI:15378"/>
        <dbReference type="ChEBI" id="CHEBI:29985"/>
        <dbReference type="ChEBI" id="CHEBI:30616"/>
        <dbReference type="ChEBI" id="CHEBI:33019"/>
        <dbReference type="ChEBI" id="CHEBI:57464"/>
        <dbReference type="ChEBI" id="CHEBI:58115"/>
        <dbReference type="ChEBI" id="CHEBI:58359"/>
        <dbReference type="ChEBI" id="CHEBI:456215"/>
        <dbReference type="EC" id="6.3.5.2"/>
    </reaction>
</comment>
<comment type="pathway">
    <text>Purine metabolism; GMP biosynthesis; GMP from XMP (L-Gln route): step 1/1.</text>
</comment>
<comment type="subunit">
    <text evidence="1">Homodimer.</text>
</comment>
<accession>Q72RB7</accession>
<evidence type="ECO:0000250" key="1"/>
<evidence type="ECO:0000255" key="2">
    <source>
        <dbReference type="PROSITE-ProRule" id="PRU00605"/>
    </source>
</evidence>
<evidence type="ECO:0000255" key="3">
    <source>
        <dbReference type="PROSITE-ProRule" id="PRU00886"/>
    </source>
</evidence>